<comment type="function">
    <text evidence="1">Catalyzes the synthesis of beta-nicotinate D-ribonucleotide from nicotinate and 5-phospho-D-ribose 1-phosphate at the expense of ATP.</text>
</comment>
<comment type="catalytic activity">
    <reaction evidence="1">
        <text>nicotinate + 5-phospho-alpha-D-ribose 1-diphosphate + ATP + H2O = nicotinate beta-D-ribonucleotide + ADP + phosphate + diphosphate</text>
        <dbReference type="Rhea" id="RHEA:36163"/>
        <dbReference type="ChEBI" id="CHEBI:15377"/>
        <dbReference type="ChEBI" id="CHEBI:30616"/>
        <dbReference type="ChEBI" id="CHEBI:32544"/>
        <dbReference type="ChEBI" id="CHEBI:33019"/>
        <dbReference type="ChEBI" id="CHEBI:43474"/>
        <dbReference type="ChEBI" id="CHEBI:57502"/>
        <dbReference type="ChEBI" id="CHEBI:58017"/>
        <dbReference type="ChEBI" id="CHEBI:456216"/>
        <dbReference type="EC" id="6.3.4.21"/>
    </reaction>
</comment>
<comment type="pathway">
    <text evidence="1">Cofactor biosynthesis; NAD(+) biosynthesis; nicotinate D-ribonucleotide from nicotinate: step 1/1.</text>
</comment>
<comment type="PTM">
    <text evidence="1">Transiently phosphorylated on a His residue during the reaction cycle. Phosphorylation strongly increases the affinity for substrates and increases the rate of nicotinate D-ribonucleotide production. Dephosphorylation regenerates the low-affinity form of the enzyme, leading to product release.</text>
</comment>
<comment type="similarity">
    <text evidence="1">Belongs to the NAPRTase family.</text>
</comment>
<reference key="1">
    <citation type="journal article" date="2003" name="J. Bacteriol.">
        <title>Comparative analyses of the complete genome sequences of Pierce's disease and citrus variegated chlorosis strains of Xylella fastidiosa.</title>
        <authorList>
            <person name="Van Sluys M.A."/>
            <person name="de Oliveira M.C."/>
            <person name="Monteiro-Vitorello C.B."/>
            <person name="Miyaki C.Y."/>
            <person name="Furlan L.R."/>
            <person name="Camargo L.E.A."/>
            <person name="da Silva A.C.R."/>
            <person name="Moon D.H."/>
            <person name="Takita M.A."/>
            <person name="Lemos E.G.M."/>
            <person name="Machado M.A."/>
            <person name="Ferro M.I.T."/>
            <person name="da Silva F.R."/>
            <person name="Goldman M.H.S."/>
            <person name="Goldman G.H."/>
            <person name="Lemos M.V.F."/>
            <person name="El-Dorry H."/>
            <person name="Tsai S.M."/>
            <person name="Carrer H."/>
            <person name="Carraro D.M."/>
            <person name="de Oliveira R.C."/>
            <person name="Nunes L.R."/>
            <person name="Siqueira W.J."/>
            <person name="Coutinho L.L."/>
            <person name="Kimura E.T."/>
            <person name="Ferro E.S."/>
            <person name="Harakava R."/>
            <person name="Kuramae E.E."/>
            <person name="Marino C.L."/>
            <person name="Giglioti E."/>
            <person name="Abreu I.L."/>
            <person name="Alves L.M.C."/>
            <person name="do Amaral A.M."/>
            <person name="Baia G.S."/>
            <person name="Blanco S.R."/>
            <person name="Brito M.S."/>
            <person name="Cannavan F.S."/>
            <person name="Celestino A.V."/>
            <person name="da Cunha A.F."/>
            <person name="Fenille R.C."/>
            <person name="Ferro J.A."/>
            <person name="Formighieri E.F."/>
            <person name="Kishi L.T."/>
            <person name="Leoni S.G."/>
            <person name="Oliveira A.R."/>
            <person name="Rosa V.E. Jr."/>
            <person name="Sassaki F.T."/>
            <person name="Sena J.A.D."/>
            <person name="de Souza A.A."/>
            <person name="Truffi D."/>
            <person name="Tsukumo F."/>
            <person name="Yanai G.M."/>
            <person name="Zaros L.G."/>
            <person name="Civerolo E.L."/>
            <person name="Simpson A.J.G."/>
            <person name="Almeida N.F. Jr."/>
            <person name="Setubal J.C."/>
            <person name="Kitajima J.P."/>
        </authorList>
    </citation>
    <scope>NUCLEOTIDE SEQUENCE [LARGE SCALE GENOMIC DNA]</scope>
    <source>
        <strain>Temecula1 / ATCC 700964</strain>
    </source>
</reference>
<organism>
    <name type="scientific">Xylella fastidiosa (strain Temecula1 / ATCC 700964)</name>
    <dbReference type="NCBI Taxonomy" id="183190"/>
    <lineage>
        <taxon>Bacteria</taxon>
        <taxon>Pseudomonadati</taxon>
        <taxon>Pseudomonadota</taxon>
        <taxon>Gammaproteobacteria</taxon>
        <taxon>Lysobacterales</taxon>
        <taxon>Lysobacteraceae</taxon>
        <taxon>Xylella</taxon>
    </lineage>
</organism>
<proteinExistence type="inferred from homology"/>
<name>PNCB_XYLFT</name>
<protein>
    <recommendedName>
        <fullName evidence="1">Nicotinate phosphoribosyltransferase</fullName>
        <shortName evidence="1">NAPRTase</shortName>
        <ecNumber evidence="1">6.3.4.21</ecNumber>
    </recommendedName>
</protein>
<gene>
    <name evidence="1" type="primary">pncB</name>
    <name type="ordered locus">PD_0393</name>
</gene>
<sequence length="394" mass="45007">MEFIIKSLLDTDLYKFTMMQAVLHQYPGAQVEYRFKCRTPGVDLARFINEISHEIDGLCGLCFSKEELDYLRGLRFMKPDFVDFLGLFHLDRKYLQLRASSQVPGEIELDIRGPWLHTILFEVPLLAIINEVWFRNTSVLNLDVGRDRLDAKVRLLKDESGYEECSIADYGTRRRYSRQWHAELLPLLAQGLGSNFVGTSNVYFAKQYGYTPLGTMAHEYLQAFQALGPRLRDSQVAGLEAWAREYRGDLGIALSDVVGLDAFLGDFDLYFCKLFDGMRHDSGDPFKWGERIIMHLESHRIDPRTKVLVFSDGLDMNKVMRLYQHFRGRCRLAFGVGTSLTNDLGPTPLQIVIKMVRCNGQPVAKLSDSPGKSMCDDPGYLHYLRQVFGVSADV</sequence>
<keyword id="KW-0436">Ligase</keyword>
<keyword id="KW-0597">Phosphoprotein</keyword>
<keyword id="KW-0662">Pyridine nucleotide biosynthesis</keyword>
<keyword id="KW-1185">Reference proteome</keyword>
<feature type="chain" id="PRO_0000205854" description="Nicotinate phosphoribosyltransferase">
    <location>
        <begin position="1"/>
        <end position="394"/>
    </location>
</feature>
<feature type="modified residue" description="Phosphohistidine; by autocatalysis" evidence="1">
    <location>
        <position position="218"/>
    </location>
</feature>
<dbReference type="EC" id="6.3.4.21" evidence="1"/>
<dbReference type="EMBL" id="AE009442">
    <property type="protein sequence ID" value="AAO28273.1"/>
    <property type="molecule type" value="Genomic_DNA"/>
</dbReference>
<dbReference type="RefSeq" id="WP_011097631.1">
    <property type="nucleotide sequence ID" value="NC_004556.1"/>
</dbReference>
<dbReference type="SMR" id="Q87EC4"/>
<dbReference type="GeneID" id="93904093"/>
<dbReference type="KEGG" id="xft:PD_0393"/>
<dbReference type="HOGENOM" id="CLU_030991_1_0_6"/>
<dbReference type="UniPathway" id="UPA00253">
    <property type="reaction ID" value="UER00457"/>
</dbReference>
<dbReference type="Proteomes" id="UP000002516">
    <property type="component" value="Chromosome"/>
</dbReference>
<dbReference type="GO" id="GO:0005829">
    <property type="term" value="C:cytosol"/>
    <property type="evidence" value="ECO:0007669"/>
    <property type="project" value="TreeGrafter"/>
</dbReference>
<dbReference type="GO" id="GO:0004516">
    <property type="term" value="F:nicotinate phosphoribosyltransferase activity"/>
    <property type="evidence" value="ECO:0007669"/>
    <property type="project" value="UniProtKB-UniRule"/>
</dbReference>
<dbReference type="GO" id="GO:0034355">
    <property type="term" value="P:NAD biosynthetic process via the salvage pathway"/>
    <property type="evidence" value="ECO:0007669"/>
    <property type="project" value="TreeGrafter"/>
</dbReference>
<dbReference type="CDD" id="cd01401">
    <property type="entry name" value="PncB_like"/>
    <property type="match status" value="1"/>
</dbReference>
<dbReference type="Gene3D" id="3.20.140.10">
    <property type="entry name" value="nicotinate phosphoribosyltransferase"/>
    <property type="match status" value="1"/>
</dbReference>
<dbReference type="HAMAP" id="MF_00570">
    <property type="entry name" value="NAPRTase"/>
    <property type="match status" value="1"/>
</dbReference>
<dbReference type="InterPro" id="IPR041525">
    <property type="entry name" value="N/Namide_PRibTrfase"/>
</dbReference>
<dbReference type="InterPro" id="IPR040727">
    <property type="entry name" value="NAPRTase_N"/>
</dbReference>
<dbReference type="InterPro" id="IPR006406">
    <property type="entry name" value="Nic_PRibTrfase"/>
</dbReference>
<dbReference type="InterPro" id="IPR007229">
    <property type="entry name" value="Nic_PRibTrfase-Fam"/>
</dbReference>
<dbReference type="InterPro" id="IPR036068">
    <property type="entry name" value="Nicotinate_pribotase-like_C"/>
</dbReference>
<dbReference type="NCBIfam" id="TIGR01514">
    <property type="entry name" value="NAPRTase"/>
    <property type="match status" value="1"/>
</dbReference>
<dbReference type="NCBIfam" id="NF003704">
    <property type="entry name" value="PRK05321.1"/>
    <property type="match status" value="1"/>
</dbReference>
<dbReference type="PANTHER" id="PTHR11098">
    <property type="entry name" value="NICOTINATE PHOSPHORIBOSYLTRANSFERASE"/>
    <property type="match status" value="1"/>
</dbReference>
<dbReference type="PANTHER" id="PTHR11098:SF1">
    <property type="entry name" value="NICOTINATE PHOSPHORIBOSYLTRANSFERASE"/>
    <property type="match status" value="1"/>
</dbReference>
<dbReference type="Pfam" id="PF04095">
    <property type="entry name" value="NAPRTase"/>
    <property type="match status" value="1"/>
</dbReference>
<dbReference type="Pfam" id="PF17767">
    <property type="entry name" value="NAPRTase_N"/>
    <property type="match status" value="1"/>
</dbReference>
<dbReference type="PIRSF" id="PIRSF000484">
    <property type="entry name" value="NAPRT"/>
    <property type="match status" value="1"/>
</dbReference>
<dbReference type="SUPFAM" id="SSF51690">
    <property type="entry name" value="Nicotinate/Quinolinate PRTase C-terminal domain-like"/>
    <property type="match status" value="1"/>
</dbReference>
<dbReference type="SUPFAM" id="SSF54675">
    <property type="entry name" value="Nicotinate/Quinolinate PRTase N-terminal domain-like"/>
    <property type="match status" value="1"/>
</dbReference>
<evidence type="ECO:0000255" key="1">
    <source>
        <dbReference type="HAMAP-Rule" id="MF_00570"/>
    </source>
</evidence>
<accession>Q87EC4</accession>